<organism>
    <name type="scientific">Pseudomonas entomophila (strain L48)</name>
    <dbReference type="NCBI Taxonomy" id="384676"/>
    <lineage>
        <taxon>Bacteria</taxon>
        <taxon>Pseudomonadati</taxon>
        <taxon>Pseudomonadota</taxon>
        <taxon>Gammaproteobacteria</taxon>
        <taxon>Pseudomonadales</taxon>
        <taxon>Pseudomonadaceae</taxon>
        <taxon>Pseudomonas</taxon>
    </lineage>
</organism>
<evidence type="ECO:0000255" key="1">
    <source>
        <dbReference type="HAMAP-Rule" id="MF_00321"/>
    </source>
</evidence>
<comment type="function">
    <text evidence="1">Necessary for normal cell division and for the maintenance of normal septation.</text>
</comment>
<comment type="cofactor">
    <cofactor evidence="1">
        <name>Mg(2+)</name>
        <dbReference type="ChEBI" id="CHEBI:18420"/>
    </cofactor>
</comment>
<comment type="similarity">
    <text evidence="1">Belongs to the TRAFAC class TrmE-Era-EngA-EngB-Septin-like GTPase superfamily. EngB GTPase family.</text>
</comment>
<proteinExistence type="inferred from homology"/>
<reference key="1">
    <citation type="journal article" date="2006" name="Nat. Biotechnol.">
        <title>Complete genome sequence of the entomopathogenic and metabolically versatile soil bacterium Pseudomonas entomophila.</title>
        <authorList>
            <person name="Vodovar N."/>
            <person name="Vallenet D."/>
            <person name="Cruveiller S."/>
            <person name="Rouy Z."/>
            <person name="Barbe V."/>
            <person name="Acosta C."/>
            <person name="Cattolico L."/>
            <person name="Jubin C."/>
            <person name="Lajus A."/>
            <person name="Segurens B."/>
            <person name="Vacherie B."/>
            <person name="Wincker P."/>
            <person name="Weissenbach J."/>
            <person name="Lemaitre B."/>
            <person name="Medigue C."/>
            <person name="Boccard F."/>
        </authorList>
    </citation>
    <scope>NUCLEOTIDE SEQUENCE [LARGE SCALE GENOMIC DNA]</scope>
    <source>
        <strain>L48</strain>
    </source>
</reference>
<dbReference type="EMBL" id="CT573326">
    <property type="protein sequence ID" value="CAK13071.1"/>
    <property type="molecule type" value="Genomic_DNA"/>
</dbReference>
<dbReference type="SMR" id="Q1IGY1"/>
<dbReference type="STRING" id="384676.PSEEN0078"/>
<dbReference type="GeneID" id="32803445"/>
<dbReference type="KEGG" id="pen:PSEEN0078"/>
<dbReference type="eggNOG" id="COG0218">
    <property type="taxonomic scope" value="Bacteria"/>
</dbReference>
<dbReference type="HOGENOM" id="CLU_033732_1_0_6"/>
<dbReference type="OrthoDB" id="9804921at2"/>
<dbReference type="Proteomes" id="UP000000658">
    <property type="component" value="Chromosome"/>
</dbReference>
<dbReference type="GO" id="GO:0005829">
    <property type="term" value="C:cytosol"/>
    <property type="evidence" value="ECO:0007669"/>
    <property type="project" value="TreeGrafter"/>
</dbReference>
<dbReference type="GO" id="GO:0005525">
    <property type="term" value="F:GTP binding"/>
    <property type="evidence" value="ECO:0007669"/>
    <property type="project" value="UniProtKB-UniRule"/>
</dbReference>
<dbReference type="GO" id="GO:0046872">
    <property type="term" value="F:metal ion binding"/>
    <property type="evidence" value="ECO:0007669"/>
    <property type="project" value="UniProtKB-KW"/>
</dbReference>
<dbReference type="GO" id="GO:0000917">
    <property type="term" value="P:division septum assembly"/>
    <property type="evidence" value="ECO:0007669"/>
    <property type="project" value="UniProtKB-KW"/>
</dbReference>
<dbReference type="CDD" id="cd01876">
    <property type="entry name" value="YihA_EngB"/>
    <property type="match status" value="1"/>
</dbReference>
<dbReference type="FunFam" id="3.40.50.300:FF:000098">
    <property type="entry name" value="Probable GTP-binding protein EngB"/>
    <property type="match status" value="1"/>
</dbReference>
<dbReference type="Gene3D" id="3.40.50.300">
    <property type="entry name" value="P-loop containing nucleotide triphosphate hydrolases"/>
    <property type="match status" value="1"/>
</dbReference>
<dbReference type="HAMAP" id="MF_00321">
    <property type="entry name" value="GTPase_EngB"/>
    <property type="match status" value="1"/>
</dbReference>
<dbReference type="InterPro" id="IPR030393">
    <property type="entry name" value="G_ENGB_dom"/>
</dbReference>
<dbReference type="InterPro" id="IPR006073">
    <property type="entry name" value="GTP-bd"/>
</dbReference>
<dbReference type="InterPro" id="IPR019987">
    <property type="entry name" value="GTP-bd_ribosome_bio_YsxC"/>
</dbReference>
<dbReference type="InterPro" id="IPR027417">
    <property type="entry name" value="P-loop_NTPase"/>
</dbReference>
<dbReference type="NCBIfam" id="TIGR03598">
    <property type="entry name" value="GTPase_YsxC"/>
    <property type="match status" value="1"/>
</dbReference>
<dbReference type="PANTHER" id="PTHR11649:SF13">
    <property type="entry name" value="ENGB-TYPE G DOMAIN-CONTAINING PROTEIN"/>
    <property type="match status" value="1"/>
</dbReference>
<dbReference type="PANTHER" id="PTHR11649">
    <property type="entry name" value="MSS1/TRME-RELATED GTP-BINDING PROTEIN"/>
    <property type="match status" value="1"/>
</dbReference>
<dbReference type="Pfam" id="PF01926">
    <property type="entry name" value="MMR_HSR1"/>
    <property type="match status" value="1"/>
</dbReference>
<dbReference type="SUPFAM" id="SSF52540">
    <property type="entry name" value="P-loop containing nucleoside triphosphate hydrolases"/>
    <property type="match status" value="1"/>
</dbReference>
<dbReference type="PROSITE" id="PS51706">
    <property type="entry name" value="G_ENGB"/>
    <property type="match status" value="1"/>
</dbReference>
<accession>Q1IGY1</accession>
<protein>
    <recommendedName>
        <fullName evidence="1">Probable GTP-binding protein EngB</fullName>
    </recommendedName>
</protein>
<gene>
    <name evidence="1" type="primary">engB</name>
    <name type="ordered locus">PSEEN0078</name>
</gene>
<keyword id="KW-0131">Cell cycle</keyword>
<keyword id="KW-0132">Cell division</keyword>
<keyword id="KW-0342">GTP-binding</keyword>
<keyword id="KW-0460">Magnesium</keyword>
<keyword id="KW-0479">Metal-binding</keyword>
<keyword id="KW-0547">Nucleotide-binding</keyword>
<keyword id="KW-0717">Septation</keyword>
<feature type="chain" id="PRO_1000005841" description="Probable GTP-binding protein EngB">
    <location>
        <begin position="1"/>
        <end position="210"/>
    </location>
</feature>
<feature type="domain" description="EngB-type G" evidence="1">
    <location>
        <begin position="30"/>
        <end position="204"/>
    </location>
</feature>
<feature type="binding site" evidence="1">
    <location>
        <begin position="38"/>
        <end position="45"/>
    </location>
    <ligand>
        <name>GTP</name>
        <dbReference type="ChEBI" id="CHEBI:37565"/>
    </ligand>
</feature>
<feature type="binding site" evidence="1">
    <location>
        <position position="45"/>
    </location>
    <ligand>
        <name>Mg(2+)</name>
        <dbReference type="ChEBI" id="CHEBI:18420"/>
    </ligand>
</feature>
<feature type="binding site" evidence="1">
    <location>
        <begin position="64"/>
        <end position="68"/>
    </location>
    <ligand>
        <name>GTP</name>
        <dbReference type="ChEBI" id="CHEBI:37565"/>
    </ligand>
</feature>
<feature type="binding site" evidence="1">
    <location>
        <position position="66"/>
    </location>
    <ligand>
        <name>Mg(2+)</name>
        <dbReference type="ChEBI" id="CHEBI:18420"/>
    </ligand>
</feature>
<feature type="binding site" evidence="1">
    <location>
        <begin position="82"/>
        <end position="85"/>
    </location>
    <ligand>
        <name>GTP</name>
        <dbReference type="ChEBI" id="CHEBI:37565"/>
    </ligand>
</feature>
<feature type="binding site" evidence="1">
    <location>
        <begin position="149"/>
        <end position="152"/>
    </location>
    <ligand>
        <name>GTP</name>
        <dbReference type="ChEBI" id="CHEBI:37565"/>
    </ligand>
</feature>
<feature type="binding site" evidence="1">
    <location>
        <begin position="182"/>
        <end position="185"/>
    </location>
    <ligand>
        <name>GTP</name>
        <dbReference type="ChEBI" id="CHEBI:37565"/>
    </ligand>
</feature>
<sequence length="210" mass="23457">MQVKNPILGLCQKATFALSAAKVEQCPEDQGYEVAFAGRSNAGKSSALNTLTHASLARTSKTPGRTQLLNFFSLDDERRLVDLPGYGYAKVPIPLKQHWQKHLEAYLGSRECLRGVILMMDVRHPMTDFDKMMLDWARASGMPMHILLTKADKLTHGAGKNTLLKVQSEIRKGWGDSTTIQLFSAPKRLGLEEAYRVLADWMELEDKPVA</sequence>
<name>ENGB_PSEE4</name>